<accession>Q9A884</accession>
<gene>
    <name evidence="1" type="primary">metG</name>
    <name type="ordered locus">CC_1480</name>
</gene>
<keyword id="KW-0030">Aminoacyl-tRNA synthetase</keyword>
<keyword id="KW-0067">ATP-binding</keyword>
<keyword id="KW-0963">Cytoplasm</keyword>
<keyword id="KW-0436">Ligase</keyword>
<keyword id="KW-0479">Metal-binding</keyword>
<keyword id="KW-0547">Nucleotide-binding</keyword>
<keyword id="KW-0648">Protein biosynthesis</keyword>
<keyword id="KW-1185">Reference proteome</keyword>
<keyword id="KW-0862">Zinc</keyword>
<evidence type="ECO:0000255" key="1">
    <source>
        <dbReference type="HAMAP-Rule" id="MF_00098"/>
    </source>
</evidence>
<proteinExistence type="inferred from homology"/>
<reference key="1">
    <citation type="journal article" date="2001" name="Proc. Natl. Acad. Sci. U.S.A.">
        <title>Complete genome sequence of Caulobacter crescentus.</title>
        <authorList>
            <person name="Nierman W.C."/>
            <person name="Feldblyum T.V."/>
            <person name="Laub M.T."/>
            <person name="Paulsen I.T."/>
            <person name="Nelson K.E."/>
            <person name="Eisen J.A."/>
            <person name="Heidelberg J.F."/>
            <person name="Alley M.R.K."/>
            <person name="Ohta N."/>
            <person name="Maddock J.R."/>
            <person name="Potocka I."/>
            <person name="Nelson W.C."/>
            <person name="Newton A."/>
            <person name="Stephens C."/>
            <person name="Phadke N.D."/>
            <person name="Ely B."/>
            <person name="DeBoy R.T."/>
            <person name="Dodson R.J."/>
            <person name="Durkin A.S."/>
            <person name="Gwinn M.L."/>
            <person name="Haft D.H."/>
            <person name="Kolonay J.F."/>
            <person name="Smit J."/>
            <person name="Craven M.B."/>
            <person name="Khouri H.M."/>
            <person name="Shetty J."/>
            <person name="Berry K.J."/>
            <person name="Utterback T.R."/>
            <person name="Tran K."/>
            <person name="Wolf A.M."/>
            <person name="Vamathevan J.J."/>
            <person name="Ermolaeva M.D."/>
            <person name="White O."/>
            <person name="Salzberg S.L."/>
            <person name="Venter J.C."/>
            <person name="Shapiro L."/>
            <person name="Fraser C.M."/>
        </authorList>
    </citation>
    <scope>NUCLEOTIDE SEQUENCE [LARGE SCALE GENOMIC DNA]</scope>
    <source>
        <strain>ATCC 19089 / CIP 103742 / CB 15</strain>
    </source>
</reference>
<protein>
    <recommendedName>
        <fullName evidence="1">Methionine--tRNA ligase</fullName>
        <ecNumber evidence="1">6.1.1.10</ecNumber>
    </recommendedName>
    <alternativeName>
        <fullName evidence="1">Methionyl-tRNA synthetase</fullName>
        <shortName evidence="1">MetRS</shortName>
    </alternativeName>
</protein>
<feature type="chain" id="PRO_0000139117" description="Methionine--tRNA ligase">
    <location>
        <begin position="1"/>
        <end position="569"/>
    </location>
</feature>
<feature type="short sequence motif" description="'HIGH' region">
    <location>
        <begin position="11"/>
        <end position="21"/>
    </location>
</feature>
<feature type="short sequence motif" description="'KMSKS' region">
    <location>
        <begin position="342"/>
        <end position="346"/>
    </location>
</feature>
<feature type="binding site" evidence="1">
    <location>
        <position position="143"/>
    </location>
    <ligand>
        <name>Zn(2+)</name>
        <dbReference type="ChEBI" id="CHEBI:29105"/>
    </ligand>
</feature>
<feature type="binding site" evidence="1">
    <location>
        <position position="146"/>
    </location>
    <ligand>
        <name>Zn(2+)</name>
        <dbReference type="ChEBI" id="CHEBI:29105"/>
    </ligand>
</feature>
<feature type="binding site" evidence="1">
    <location>
        <position position="156"/>
    </location>
    <ligand>
        <name>Zn(2+)</name>
        <dbReference type="ChEBI" id="CHEBI:29105"/>
    </ligand>
</feature>
<feature type="binding site" evidence="1">
    <location>
        <position position="159"/>
    </location>
    <ligand>
        <name>Zn(2+)</name>
        <dbReference type="ChEBI" id="CHEBI:29105"/>
    </ligand>
</feature>
<feature type="binding site" evidence="1">
    <location>
        <position position="345"/>
    </location>
    <ligand>
        <name>ATP</name>
        <dbReference type="ChEBI" id="CHEBI:30616"/>
    </ligand>
</feature>
<comment type="function">
    <text evidence="1">Is required not only for elongation of protein synthesis but also for the initiation of all mRNA translation through initiator tRNA(fMet) aminoacylation.</text>
</comment>
<comment type="catalytic activity">
    <reaction evidence="1">
        <text>tRNA(Met) + L-methionine + ATP = L-methionyl-tRNA(Met) + AMP + diphosphate</text>
        <dbReference type="Rhea" id="RHEA:13481"/>
        <dbReference type="Rhea" id="RHEA-COMP:9667"/>
        <dbReference type="Rhea" id="RHEA-COMP:9698"/>
        <dbReference type="ChEBI" id="CHEBI:30616"/>
        <dbReference type="ChEBI" id="CHEBI:33019"/>
        <dbReference type="ChEBI" id="CHEBI:57844"/>
        <dbReference type="ChEBI" id="CHEBI:78442"/>
        <dbReference type="ChEBI" id="CHEBI:78530"/>
        <dbReference type="ChEBI" id="CHEBI:456215"/>
        <dbReference type="EC" id="6.1.1.10"/>
    </reaction>
</comment>
<comment type="cofactor">
    <cofactor evidence="1">
        <name>Zn(2+)</name>
        <dbReference type="ChEBI" id="CHEBI:29105"/>
    </cofactor>
    <text evidence="1">Binds 1 zinc ion per subunit.</text>
</comment>
<comment type="subunit">
    <text evidence="1">Monomer.</text>
</comment>
<comment type="subcellular location">
    <subcellularLocation>
        <location evidence="1">Cytoplasm</location>
    </subcellularLocation>
</comment>
<comment type="similarity">
    <text evidence="1">Belongs to the class-I aminoacyl-tRNA synthetase family. MetG type 1 subfamily.</text>
</comment>
<organism>
    <name type="scientific">Caulobacter vibrioides (strain ATCC 19089 / CIP 103742 / CB 15)</name>
    <name type="common">Caulobacter crescentus</name>
    <dbReference type="NCBI Taxonomy" id="190650"/>
    <lineage>
        <taxon>Bacteria</taxon>
        <taxon>Pseudomonadati</taxon>
        <taxon>Pseudomonadota</taxon>
        <taxon>Alphaproteobacteria</taxon>
        <taxon>Caulobacterales</taxon>
        <taxon>Caulobacteraceae</taxon>
        <taxon>Caulobacter</taxon>
    </lineage>
</organism>
<name>SYM_CAUVC</name>
<sequence length="569" mass="63727">MARILITSALPYINGIKHLGNLAGSMLPADVYARFKRAQGHETLYICATDEHGTPAELAAAAAGQDVATYCAEQHVLQHEVGRAFGLSWDHFGRSSSPQNHRLTQHFCQALEDHGLIEERVDQMVYSVDDKRFLPDRYVEGTCPHCKFEKARGDQCDNCGNLLDPTDLIDPYSVISGSRNIEVRDTKHLYLLQTKMQDKIRAWVDAHADWPPLARSIAYKHLDEGLIDRGITRDLAWGIPVAQDGVPRPGFEEKVFYVWFDAPIEYIAATQEWAEGSPDRDWKRWWRTDAGADDVRYVQFMGKDNVAFHTVSFPATILGSEEPWKSVDMLKAFNWLNWYGGKFSTSNKRGVFMDAALEILPPDLWRWYLTANSPEGSDTAFTWEQFASAVNRDLADVLGNFVNRILKFNESKFEGVVPAGGEPGPLEEKLFADVSARLADLAEQMDAIEIRKSAQALRALWVVGNEYLQEAAPWTAIKTDRDRAAVIVRTALNLAALYAKISAPFIPFAAEKIGDAFGLDFPASWPSNDAKAELNTLSVGRPITVPEVLFKKIEDEQIAEWTARFGGAE</sequence>
<dbReference type="EC" id="6.1.1.10" evidence="1"/>
<dbReference type="EMBL" id="AE005673">
    <property type="protein sequence ID" value="AAK23459.1"/>
    <property type="molecule type" value="Genomic_DNA"/>
</dbReference>
<dbReference type="PIR" id="G87432">
    <property type="entry name" value="G87432"/>
</dbReference>
<dbReference type="RefSeq" id="NP_420291.1">
    <property type="nucleotide sequence ID" value="NC_002696.2"/>
</dbReference>
<dbReference type="RefSeq" id="WP_010919354.1">
    <property type="nucleotide sequence ID" value="NC_002696.2"/>
</dbReference>
<dbReference type="SMR" id="Q9A884"/>
<dbReference type="STRING" id="190650.CC_1480"/>
<dbReference type="EnsemblBacteria" id="AAK23459">
    <property type="protein sequence ID" value="AAK23459"/>
    <property type="gene ID" value="CC_1480"/>
</dbReference>
<dbReference type="KEGG" id="ccr:CC_1480"/>
<dbReference type="PATRIC" id="fig|190650.5.peg.1507"/>
<dbReference type="eggNOG" id="COG0143">
    <property type="taxonomic scope" value="Bacteria"/>
</dbReference>
<dbReference type="HOGENOM" id="CLU_009710_1_2_5"/>
<dbReference type="BioCyc" id="CAULO:CC1480-MONOMER"/>
<dbReference type="Proteomes" id="UP000001816">
    <property type="component" value="Chromosome"/>
</dbReference>
<dbReference type="GO" id="GO:0017101">
    <property type="term" value="C:aminoacyl-tRNA synthetase multienzyme complex"/>
    <property type="evidence" value="ECO:0007669"/>
    <property type="project" value="TreeGrafter"/>
</dbReference>
<dbReference type="GO" id="GO:0005829">
    <property type="term" value="C:cytosol"/>
    <property type="evidence" value="ECO:0007669"/>
    <property type="project" value="TreeGrafter"/>
</dbReference>
<dbReference type="GO" id="GO:0005524">
    <property type="term" value="F:ATP binding"/>
    <property type="evidence" value="ECO:0007669"/>
    <property type="project" value="UniProtKB-UniRule"/>
</dbReference>
<dbReference type="GO" id="GO:0046872">
    <property type="term" value="F:metal ion binding"/>
    <property type="evidence" value="ECO:0007669"/>
    <property type="project" value="UniProtKB-KW"/>
</dbReference>
<dbReference type="GO" id="GO:0004825">
    <property type="term" value="F:methionine-tRNA ligase activity"/>
    <property type="evidence" value="ECO:0007669"/>
    <property type="project" value="UniProtKB-UniRule"/>
</dbReference>
<dbReference type="GO" id="GO:0006431">
    <property type="term" value="P:methionyl-tRNA aminoacylation"/>
    <property type="evidence" value="ECO:0007669"/>
    <property type="project" value="UniProtKB-UniRule"/>
</dbReference>
<dbReference type="CDD" id="cd07957">
    <property type="entry name" value="Anticodon_Ia_Met"/>
    <property type="match status" value="1"/>
</dbReference>
<dbReference type="CDD" id="cd00814">
    <property type="entry name" value="MetRS_core"/>
    <property type="match status" value="1"/>
</dbReference>
<dbReference type="FunFam" id="2.20.28.20:FF:000001">
    <property type="entry name" value="Methionine--tRNA ligase"/>
    <property type="match status" value="1"/>
</dbReference>
<dbReference type="Gene3D" id="3.40.50.620">
    <property type="entry name" value="HUPs"/>
    <property type="match status" value="1"/>
</dbReference>
<dbReference type="Gene3D" id="1.10.730.10">
    <property type="entry name" value="Isoleucyl-tRNA Synthetase, Domain 1"/>
    <property type="match status" value="1"/>
</dbReference>
<dbReference type="Gene3D" id="2.20.28.20">
    <property type="entry name" value="Methionyl-tRNA synthetase, Zn-domain"/>
    <property type="match status" value="1"/>
</dbReference>
<dbReference type="HAMAP" id="MF_00098">
    <property type="entry name" value="Met_tRNA_synth_type1"/>
    <property type="match status" value="1"/>
</dbReference>
<dbReference type="InterPro" id="IPR041872">
    <property type="entry name" value="Anticodon_Met"/>
</dbReference>
<dbReference type="InterPro" id="IPR023458">
    <property type="entry name" value="Met-tRNA_ligase_1"/>
</dbReference>
<dbReference type="InterPro" id="IPR014758">
    <property type="entry name" value="Met-tRNA_synth"/>
</dbReference>
<dbReference type="InterPro" id="IPR015413">
    <property type="entry name" value="Methionyl/Leucyl_tRNA_Synth"/>
</dbReference>
<dbReference type="InterPro" id="IPR033911">
    <property type="entry name" value="MetRS_core"/>
</dbReference>
<dbReference type="InterPro" id="IPR029038">
    <property type="entry name" value="MetRS_Zn"/>
</dbReference>
<dbReference type="InterPro" id="IPR014729">
    <property type="entry name" value="Rossmann-like_a/b/a_fold"/>
</dbReference>
<dbReference type="InterPro" id="IPR009080">
    <property type="entry name" value="tRNAsynth_Ia_anticodon-bd"/>
</dbReference>
<dbReference type="NCBIfam" id="TIGR00398">
    <property type="entry name" value="metG"/>
    <property type="match status" value="1"/>
</dbReference>
<dbReference type="PANTHER" id="PTHR45765">
    <property type="entry name" value="METHIONINE--TRNA LIGASE"/>
    <property type="match status" value="1"/>
</dbReference>
<dbReference type="PANTHER" id="PTHR45765:SF1">
    <property type="entry name" value="METHIONINE--TRNA LIGASE, CYTOPLASMIC"/>
    <property type="match status" value="1"/>
</dbReference>
<dbReference type="Pfam" id="PF19303">
    <property type="entry name" value="Anticodon_3"/>
    <property type="match status" value="1"/>
</dbReference>
<dbReference type="Pfam" id="PF09334">
    <property type="entry name" value="tRNA-synt_1g"/>
    <property type="match status" value="1"/>
</dbReference>
<dbReference type="PRINTS" id="PR01041">
    <property type="entry name" value="TRNASYNTHMET"/>
</dbReference>
<dbReference type="SUPFAM" id="SSF47323">
    <property type="entry name" value="Anticodon-binding domain of a subclass of class I aminoacyl-tRNA synthetases"/>
    <property type="match status" value="1"/>
</dbReference>
<dbReference type="SUPFAM" id="SSF57770">
    <property type="entry name" value="Methionyl-tRNA synthetase (MetRS), Zn-domain"/>
    <property type="match status" value="1"/>
</dbReference>
<dbReference type="SUPFAM" id="SSF52374">
    <property type="entry name" value="Nucleotidylyl transferase"/>
    <property type="match status" value="1"/>
</dbReference>